<protein>
    <recommendedName>
        <fullName evidence="1">Mannonate dehydratase</fullName>
        <ecNumber evidence="1">4.2.1.8</ecNumber>
    </recommendedName>
    <alternativeName>
        <fullName evidence="1">D-mannonate hydro-lyase</fullName>
    </alternativeName>
</protein>
<name>UXUA_ECO5E</name>
<feature type="chain" id="PRO_1000094215" description="Mannonate dehydratase">
    <location>
        <begin position="1"/>
        <end position="394"/>
    </location>
</feature>
<organism>
    <name type="scientific">Escherichia coli O157:H7 (strain EC4115 / EHEC)</name>
    <dbReference type="NCBI Taxonomy" id="444450"/>
    <lineage>
        <taxon>Bacteria</taxon>
        <taxon>Pseudomonadati</taxon>
        <taxon>Pseudomonadota</taxon>
        <taxon>Gammaproteobacteria</taxon>
        <taxon>Enterobacterales</taxon>
        <taxon>Enterobacteriaceae</taxon>
        <taxon>Escherichia</taxon>
    </lineage>
</organism>
<keyword id="KW-0408">Iron</keyword>
<keyword id="KW-0456">Lyase</keyword>
<keyword id="KW-0464">Manganese</keyword>
<comment type="function">
    <text evidence="1">Catalyzes the dehydration of D-mannonate.</text>
</comment>
<comment type="catalytic activity">
    <reaction evidence="1">
        <text>D-mannonate = 2-dehydro-3-deoxy-D-gluconate + H2O</text>
        <dbReference type="Rhea" id="RHEA:20097"/>
        <dbReference type="ChEBI" id="CHEBI:15377"/>
        <dbReference type="ChEBI" id="CHEBI:17767"/>
        <dbReference type="ChEBI" id="CHEBI:57990"/>
        <dbReference type="EC" id="4.2.1.8"/>
    </reaction>
</comment>
<comment type="cofactor">
    <cofactor evidence="1">
        <name>Fe(2+)</name>
        <dbReference type="ChEBI" id="CHEBI:29033"/>
    </cofactor>
    <cofactor evidence="1">
        <name>Mn(2+)</name>
        <dbReference type="ChEBI" id="CHEBI:29035"/>
    </cofactor>
</comment>
<comment type="pathway">
    <text evidence="1">Carbohydrate metabolism; pentose and glucuronate interconversion.</text>
</comment>
<comment type="similarity">
    <text evidence="1">Belongs to the mannonate dehydratase family.</text>
</comment>
<sequence length="394" mass="44805">MEQTWRWYGPNDPVSLADVRQAGATGVVTALHHIPNGEVWSVEEILKRKAIVEDAGLVWSVVESVPIHEDIKTHTGNYEQWIANYQQTLRNLAQCGIRTVCYNFMPVLDWTRTDLEYVLPDGSKALRFDQIEFAAFEMHILKRPGAEADYTEEEIAQAAERFATMSDEDKARLTRNIIAGLPGAEEGYTLDQFRKHLELYKDIDKAKLRENFAVFLKAIIPVAEEVGVRMAVHPDDPPRPILGLPRIVSTIEDMQWMVDTVNSMANGFTMCTGSYGVRADNDLVDMIKQFGPRIYFTHLRSTMREDNPKTFHEAAHLNGDVDMYEVVKAIVEEEHRRKAEGKEDLIPMRPDHGHQMLDDLKKKTNPGYSAIGRLKGLAEVRGVELAIQRAFFSH</sequence>
<accession>B5Z3R0</accession>
<dbReference type="EC" id="4.2.1.8" evidence="1"/>
<dbReference type="EMBL" id="CP001164">
    <property type="protein sequence ID" value="ACI37567.1"/>
    <property type="molecule type" value="Genomic_DNA"/>
</dbReference>
<dbReference type="RefSeq" id="WP_000438581.1">
    <property type="nucleotide sequence ID" value="NC_011353.1"/>
</dbReference>
<dbReference type="SMR" id="B5Z3R0"/>
<dbReference type="KEGG" id="ecf:ECH74115_5828"/>
<dbReference type="HOGENOM" id="CLU_058621_2_0_6"/>
<dbReference type="UniPathway" id="UPA00246"/>
<dbReference type="GO" id="GO:0008198">
    <property type="term" value="F:ferrous iron binding"/>
    <property type="evidence" value="ECO:0007669"/>
    <property type="project" value="TreeGrafter"/>
</dbReference>
<dbReference type="GO" id="GO:0030145">
    <property type="term" value="F:manganese ion binding"/>
    <property type="evidence" value="ECO:0007669"/>
    <property type="project" value="TreeGrafter"/>
</dbReference>
<dbReference type="GO" id="GO:0008927">
    <property type="term" value="F:mannonate dehydratase activity"/>
    <property type="evidence" value="ECO:0007669"/>
    <property type="project" value="UniProtKB-UniRule"/>
</dbReference>
<dbReference type="GO" id="GO:0042840">
    <property type="term" value="P:D-glucuronate catabolic process"/>
    <property type="evidence" value="ECO:0007669"/>
    <property type="project" value="TreeGrafter"/>
</dbReference>
<dbReference type="FunFam" id="3.20.20.150:FF:000004">
    <property type="entry name" value="Mannonate dehydratase"/>
    <property type="match status" value="1"/>
</dbReference>
<dbReference type="FunFam" id="3.20.20.150:FF:000005">
    <property type="entry name" value="Mannonate dehydratase"/>
    <property type="match status" value="1"/>
</dbReference>
<dbReference type="Gene3D" id="3.20.20.150">
    <property type="entry name" value="Divalent-metal-dependent TIM barrel enzymes"/>
    <property type="match status" value="2"/>
</dbReference>
<dbReference type="HAMAP" id="MF_00106">
    <property type="entry name" value="UxuA"/>
    <property type="match status" value="1"/>
</dbReference>
<dbReference type="InterPro" id="IPR004628">
    <property type="entry name" value="Man_deHydtase"/>
</dbReference>
<dbReference type="InterPro" id="IPR036237">
    <property type="entry name" value="Xyl_isomerase-like_sf"/>
</dbReference>
<dbReference type="NCBIfam" id="NF003027">
    <property type="entry name" value="PRK03906.1"/>
    <property type="match status" value="1"/>
</dbReference>
<dbReference type="NCBIfam" id="TIGR00695">
    <property type="entry name" value="uxuA"/>
    <property type="match status" value="1"/>
</dbReference>
<dbReference type="PANTHER" id="PTHR30387">
    <property type="entry name" value="MANNONATE DEHYDRATASE"/>
    <property type="match status" value="1"/>
</dbReference>
<dbReference type="PANTHER" id="PTHR30387:SF2">
    <property type="entry name" value="MANNONATE DEHYDRATASE"/>
    <property type="match status" value="1"/>
</dbReference>
<dbReference type="Pfam" id="PF03786">
    <property type="entry name" value="UxuA"/>
    <property type="match status" value="1"/>
</dbReference>
<dbReference type="PIRSF" id="PIRSF016049">
    <property type="entry name" value="Man_dehyd"/>
    <property type="match status" value="1"/>
</dbReference>
<dbReference type="SUPFAM" id="SSF51658">
    <property type="entry name" value="Xylose isomerase-like"/>
    <property type="match status" value="1"/>
</dbReference>
<evidence type="ECO:0000255" key="1">
    <source>
        <dbReference type="HAMAP-Rule" id="MF_00106"/>
    </source>
</evidence>
<reference key="1">
    <citation type="journal article" date="2011" name="Proc. Natl. Acad. Sci. U.S.A.">
        <title>Genomic anatomy of Escherichia coli O157:H7 outbreaks.</title>
        <authorList>
            <person name="Eppinger M."/>
            <person name="Mammel M.K."/>
            <person name="Leclerc J.E."/>
            <person name="Ravel J."/>
            <person name="Cebula T.A."/>
        </authorList>
    </citation>
    <scope>NUCLEOTIDE SEQUENCE [LARGE SCALE GENOMIC DNA]</scope>
    <source>
        <strain>EC4115 / EHEC</strain>
    </source>
</reference>
<gene>
    <name evidence="1" type="primary">uxuA</name>
    <name type="ordered locus">ECH74115_5828</name>
</gene>
<proteinExistence type="inferred from homology"/>